<reference key="1">
    <citation type="journal article" date="1998" name="Nature">
        <title>Deciphering the biology of Mycobacterium tuberculosis from the complete genome sequence.</title>
        <authorList>
            <person name="Cole S.T."/>
            <person name="Brosch R."/>
            <person name="Parkhill J."/>
            <person name="Garnier T."/>
            <person name="Churcher C.M."/>
            <person name="Harris D.E."/>
            <person name="Gordon S.V."/>
            <person name="Eiglmeier K."/>
            <person name="Gas S."/>
            <person name="Barry C.E. III"/>
            <person name="Tekaia F."/>
            <person name="Badcock K."/>
            <person name="Basham D."/>
            <person name="Brown D."/>
            <person name="Chillingworth T."/>
            <person name="Connor R."/>
            <person name="Davies R.M."/>
            <person name="Devlin K."/>
            <person name="Feltwell T."/>
            <person name="Gentles S."/>
            <person name="Hamlin N."/>
            <person name="Holroyd S."/>
            <person name="Hornsby T."/>
            <person name="Jagels K."/>
            <person name="Krogh A."/>
            <person name="McLean J."/>
            <person name="Moule S."/>
            <person name="Murphy L.D."/>
            <person name="Oliver S."/>
            <person name="Osborne J."/>
            <person name="Quail M.A."/>
            <person name="Rajandream M.A."/>
            <person name="Rogers J."/>
            <person name="Rutter S."/>
            <person name="Seeger K."/>
            <person name="Skelton S."/>
            <person name="Squares S."/>
            <person name="Squares R."/>
            <person name="Sulston J.E."/>
            <person name="Taylor K."/>
            <person name="Whitehead S."/>
            <person name="Barrell B.G."/>
        </authorList>
    </citation>
    <scope>NUCLEOTIDE SEQUENCE [LARGE SCALE GENOMIC DNA]</scope>
    <source>
        <strain>ATCC 25618 / H37Rv</strain>
    </source>
</reference>
<reference key="2">
    <citation type="journal article" date="2001" name="Proc. Natl. Acad. Sci. U.S.A.">
        <title>Regulation of the Mycobacterium tuberculosis hypoxic response gene encoding alpha -crystallin.</title>
        <authorList>
            <person name="Sherman D.R."/>
            <person name="Voskuil M."/>
            <person name="Schnappinger D."/>
            <person name="Liao R."/>
            <person name="Harrell M.I."/>
            <person name="Schoolnik G.K."/>
        </authorList>
    </citation>
    <scope>INDUCTION BY HYPOXIA</scope>
    <source>
        <strain>ATCC 25618 / H37Rv</strain>
    </source>
</reference>
<reference key="3">
    <citation type="journal article" date="2003" name="J. Exp. Med.">
        <title>Inhibition of respiration by nitric oxide induces a Mycobacterium tuberculosis dormancy program.</title>
        <authorList>
            <person name="Voskuil M.I."/>
            <person name="Schnappinger D."/>
            <person name="Visconti K.C."/>
            <person name="Harrell M.I."/>
            <person name="Dolganov G.M."/>
            <person name="Sherman D.R."/>
            <person name="Schoolnik G.K."/>
        </authorList>
    </citation>
    <scope>INDUCTION BY NITRIC OXIDE (NO) AND BY HYPOXIA</scope>
    <scope>DORMANCY REGULON</scope>
    <source>
        <strain>ATCC 25618 / H37Rv</strain>
    </source>
</reference>
<reference key="4">
    <citation type="journal article" date="2008" name="Cell Host Microbe">
        <title>Mycobacterium tuberculosis senses host-derived carbon monoxide during macrophage infection.</title>
        <authorList>
            <person name="Shiloh M.U."/>
            <person name="Manzanillo P."/>
            <person name="Cox J.S."/>
        </authorList>
    </citation>
    <scope>INDUCTION BY CARBON MONOXIDE (CO)</scope>
    <source>
        <strain>ATCC 35801 / TMC 107 / Erdman</strain>
    </source>
</reference>
<reference key="5">
    <citation type="journal article" date="2008" name="J. Biol. Chem.">
        <title>Heme oxygenase-1-derived carbon monoxide induces the Mycobacterium tuberculosis dormancy regulon.</title>
        <authorList>
            <person name="Kumar A."/>
            <person name="Deshane J.S."/>
            <person name="Crossman D.K."/>
            <person name="Bolisetty S."/>
            <person name="Yan B.S."/>
            <person name="Kramnik I."/>
            <person name="Agarwal A."/>
            <person name="Steyn A.J."/>
        </authorList>
    </citation>
    <scope>INDUCTION BY CARBON MONOXIDE (CO)</scope>
    <scope>DORMANCY REGULON</scope>
    <source>
        <strain>ATCC 25618 / H37Rv</strain>
    </source>
</reference>
<reference key="6">
    <citation type="journal article" date="2011" name="Mol. Cell. Proteomics">
        <title>Proteogenomic analysis of Mycobacterium tuberculosis by high resolution mass spectrometry.</title>
        <authorList>
            <person name="Kelkar D.S."/>
            <person name="Kumar D."/>
            <person name="Kumar P."/>
            <person name="Balakrishnan L."/>
            <person name="Muthusamy B."/>
            <person name="Yadav A.K."/>
            <person name="Shrivastava P."/>
            <person name="Marimuthu A."/>
            <person name="Anand S."/>
            <person name="Sundaram H."/>
            <person name="Kingsbury R."/>
            <person name="Harsha H.C."/>
            <person name="Nair B."/>
            <person name="Prasad T.S."/>
            <person name="Chauhan D.S."/>
            <person name="Katoch K."/>
            <person name="Katoch V.M."/>
            <person name="Kumar P."/>
            <person name="Chaerkady R."/>
            <person name="Ramachandran S."/>
            <person name="Dash D."/>
            <person name="Pandey A."/>
        </authorList>
    </citation>
    <scope>IDENTIFICATION BY MASS SPECTROMETRY [LARGE SCALE ANALYSIS]</scope>
    <source>
        <strain>ATCC 25618 / H37Rv</strain>
    </source>
</reference>
<dbReference type="EMBL" id="AL123456">
    <property type="protein sequence ID" value="CCP44579.1"/>
    <property type="molecule type" value="Genomic_DNA"/>
</dbReference>
<dbReference type="PIR" id="G70982">
    <property type="entry name" value="G70982"/>
</dbReference>
<dbReference type="RefSeq" id="NP_216329.1">
    <property type="nucleotide sequence ID" value="NC_000962.3"/>
</dbReference>
<dbReference type="RefSeq" id="WP_003409199.1">
    <property type="nucleotide sequence ID" value="NZ_NVQJ01000070.1"/>
</dbReference>
<dbReference type="PDB" id="7NHZ">
    <property type="method" value="NMR"/>
    <property type="chains" value="A=28-143"/>
</dbReference>
<dbReference type="PDBsum" id="7NHZ"/>
<dbReference type="SMR" id="P9WLS1"/>
<dbReference type="STRING" id="83332.Rv1813c"/>
<dbReference type="PaxDb" id="83332-Rv1813c"/>
<dbReference type="DNASU" id="885546"/>
<dbReference type="GeneID" id="885546"/>
<dbReference type="KEGG" id="mtu:Rv1813c"/>
<dbReference type="KEGG" id="mtv:RVBD_1813c"/>
<dbReference type="TubercuList" id="Rv1813c"/>
<dbReference type="eggNOG" id="ENOG502ZK3D">
    <property type="taxonomic scope" value="Bacteria"/>
</dbReference>
<dbReference type="InParanoid" id="P9WLS1"/>
<dbReference type="OrthoDB" id="4731956at2"/>
<dbReference type="Proteomes" id="UP000001584">
    <property type="component" value="Chromosome"/>
</dbReference>
<dbReference type="InterPro" id="IPR025240">
    <property type="entry name" value="DUF4189"/>
</dbReference>
<dbReference type="Pfam" id="PF13827">
    <property type="entry name" value="DUF4189"/>
    <property type="match status" value="1"/>
</dbReference>
<keyword id="KW-0002">3D-structure</keyword>
<keyword id="KW-1185">Reference proteome</keyword>
<keyword id="KW-0732">Signal</keyword>
<protein>
    <recommendedName>
        <fullName>Uncharacterized protein Rv1813c</fullName>
    </recommendedName>
</protein>
<comment type="induction">
    <text evidence="2 3 4 5">A member of the dormancy regulon. Induced in response to reduced oxygen tension (hypoxia), low levels of nitric oxide (NO) and carbon monoxide (CO). It is hoped that this regulon will give insight into the latent, or dormant phase of infection.</text>
</comment>
<comment type="similarity">
    <text evidence="6">To M.tuberculosis Rv1269c.</text>
</comment>
<feature type="signal peptide" evidence="1">
    <location>
        <begin position="1"/>
        <end position="32"/>
    </location>
</feature>
<feature type="chain" id="PRO_0000103898" description="Uncharacterized protein Rv1813c">
    <location>
        <begin position="33"/>
        <end position="143"/>
    </location>
</feature>
<feature type="strand" evidence="7">
    <location>
        <begin position="46"/>
        <end position="48"/>
    </location>
</feature>
<feature type="strand" evidence="7">
    <location>
        <begin position="58"/>
        <end position="64"/>
    </location>
</feature>
<feature type="turn" evidence="7">
    <location>
        <begin position="65"/>
        <end position="67"/>
    </location>
</feature>
<feature type="strand" evidence="7">
    <location>
        <begin position="68"/>
        <end position="76"/>
    </location>
</feature>
<feature type="helix" evidence="7">
    <location>
        <begin position="78"/>
        <end position="89"/>
    </location>
</feature>
<feature type="strand" evidence="7">
    <location>
        <begin position="98"/>
        <end position="109"/>
    </location>
</feature>
<feature type="strand" evidence="7">
    <location>
        <begin position="112"/>
        <end position="120"/>
    </location>
</feature>
<feature type="helix" evidence="7">
    <location>
        <begin position="121"/>
        <end position="131"/>
    </location>
</feature>
<feature type="strand" evidence="7">
    <location>
        <begin position="134"/>
        <end position="142"/>
    </location>
</feature>
<sequence length="143" mass="14981">MITNLRRRTAMAAAGLGAALGLGILLVPTVDAHLANGSMSEVMMSEIAGLPIPPIIHYGAIAYAPSGASGKAWHQRTPARAEQVALEKCGDKTCKVVSRFTRCGAVAYNGSKYQGGTGLTRRAAEDDAVNRLEGGRIVNWACN</sequence>
<evidence type="ECO:0000255" key="1"/>
<evidence type="ECO:0000269" key="2">
    <source>
    </source>
</evidence>
<evidence type="ECO:0000269" key="3">
    <source>
    </source>
</evidence>
<evidence type="ECO:0000269" key="4">
    <source>
    </source>
</evidence>
<evidence type="ECO:0000269" key="5">
    <source>
    </source>
</evidence>
<evidence type="ECO:0000305" key="6"/>
<evidence type="ECO:0007829" key="7">
    <source>
        <dbReference type="PDB" id="7NHZ"/>
    </source>
</evidence>
<accession>P9WLS1</accession>
<accession>L0TAP3</accession>
<accession>P64889</accession>
<accession>Q50620</accession>
<organism>
    <name type="scientific">Mycobacterium tuberculosis (strain ATCC 25618 / H37Rv)</name>
    <dbReference type="NCBI Taxonomy" id="83332"/>
    <lineage>
        <taxon>Bacteria</taxon>
        <taxon>Bacillati</taxon>
        <taxon>Actinomycetota</taxon>
        <taxon>Actinomycetes</taxon>
        <taxon>Mycobacteriales</taxon>
        <taxon>Mycobacteriaceae</taxon>
        <taxon>Mycobacterium</taxon>
        <taxon>Mycobacterium tuberculosis complex</taxon>
    </lineage>
</organism>
<gene>
    <name type="ordered locus">Rv1813c</name>
    <name type="ORF">MTCY1A11.30</name>
    <name type="ORF">MTY16F9.01</name>
</gene>
<proteinExistence type="evidence at protein level"/>
<name>Y1813_MYCTU</name>